<name>LGT_CHLAD</name>
<accession>B8G5Z3</accession>
<dbReference type="EC" id="2.5.1.145" evidence="1"/>
<dbReference type="EMBL" id="CP001337">
    <property type="protein sequence ID" value="ACL25726.1"/>
    <property type="molecule type" value="Genomic_DNA"/>
</dbReference>
<dbReference type="RefSeq" id="WP_015941582.1">
    <property type="nucleotide sequence ID" value="NC_011831.1"/>
</dbReference>
<dbReference type="SMR" id="B8G5Z3"/>
<dbReference type="STRING" id="326427.Cagg_2864"/>
<dbReference type="KEGG" id="cag:Cagg_2864"/>
<dbReference type="eggNOG" id="COG0682">
    <property type="taxonomic scope" value="Bacteria"/>
</dbReference>
<dbReference type="HOGENOM" id="CLU_013386_1_2_0"/>
<dbReference type="OrthoDB" id="871140at2"/>
<dbReference type="UniPathway" id="UPA00664"/>
<dbReference type="Proteomes" id="UP000002508">
    <property type="component" value="Chromosome"/>
</dbReference>
<dbReference type="GO" id="GO:0005886">
    <property type="term" value="C:plasma membrane"/>
    <property type="evidence" value="ECO:0007669"/>
    <property type="project" value="UniProtKB-SubCell"/>
</dbReference>
<dbReference type="GO" id="GO:0008961">
    <property type="term" value="F:phosphatidylglycerol-prolipoprotein diacylglyceryl transferase activity"/>
    <property type="evidence" value="ECO:0007669"/>
    <property type="project" value="UniProtKB-UniRule"/>
</dbReference>
<dbReference type="GO" id="GO:0042158">
    <property type="term" value="P:lipoprotein biosynthetic process"/>
    <property type="evidence" value="ECO:0007669"/>
    <property type="project" value="UniProtKB-UniRule"/>
</dbReference>
<dbReference type="HAMAP" id="MF_01147">
    <property type="entry name" value="Lgt"/>
    <property type="match status" value="1"/>
</dbReference>
<dbReference type="InterPro" id="IPR001640">
    <property type="entry name" value="Lgt"/>
</dbReference>
<dbReference type="NCBIfam" id="TIGR00544">
    <property type="entry name" value="lgt"/>
    <property type="match status" value="1"/>
</dbReference>
<dbReference type="PANTHER" id="PTHR30589:SF0">
    <property type="entry name" value="PHOSPHATIDYLGLYCEROL--PROLIPOPROTEIN DIACYLGLYCERYL TRANSFERASE"/>
    <property type="match status" value="1"/>
</dbReference>
<dbReference type="PANTHER" id="PTHR30589">
    <property type="entry name" value="PROLIPOPROTEIN DIACYLGLYCERYL TRANSFERASE"/>
    <property type="match status" value="1"/>
</dbReference>
<dbReference type="Pfam" id="PF01790">
    <property type="entry name" value="LGT"/>
    <property type="match status" value="1"/>
</dbReference>
<dbReference type="PROSITE" id="PS01311">
    <property type="entry name" value="LGT"/>
    <property type="match status" value="1"/>
</dbReference>
<organism>
    <name type="scientific">Chloroflexus aggregans (strain MD-66 / DSM 9485)</name>
    <dbReference type="NCBI Taxonomy" id="326427"/>
    <lineage>
        <taxon>Bacteria</taxon>
        <taxon>Bacillati</taxon>
        <taxon>Chloroflexota</taxon>
        <taxon>Chloroflexia</taxon>
        <taxon>Chloroflexales</taxon>
        <taxon>Chloroflexineae</taxon>
        <taxon>Chloroflexaceae</taxon>
        <taxon>Chloroflexus</taxon>
    </lineage>
</organism>
<proteinExistence type="inferred from homology"/>
<keyword id="KW-1003">Cell membrane</keyword>
<keyword id="KW-0472">Membrane</keyword>
<keyword id="KW-0808">Transferase</keyword>
<keyword id="KW-0812">Transmembrane</keyword>
<keyword id="KW-1133">Transmembrane helix</keyword>
<sequence>MVLYPPDDPFLISFTLFGLPIVVRWYGAIIMTGALIAALLASRRAVARGYHPDHVWNQLMLGLVLGIAGARIYYVAFEWERFAPNPWSVFNLTTGGIAIHGAIIGALLSTVIYTRYAGLPYWDWLDVCVPGFLLAQSIGRWGNFFNQEAYGRPTDLPFGLRIDPEYRVPPYNDLTTYPITTLFHPTFLYESVWNLVGVGILLWLDRRFGRLAPPERRRLNPGDLLFLYGIIYSSGRFWIEGLRIDSLCANGVGGSCEGSIRVAQLVSMVAIVVCGVLIFLNHRRPFAGTPTVRPDGDASPVSEAR</sequence>
<comment type="function">
    <text evidence="1">Catalyzes the transfer of the diacylglyceryl group from phosphatidylglycerol to the sulfhydryl group of the N-terminal cysteine of a prolipoprotein, the first step in the formation of mature lipoproteins.</text>
</comment>
<comment type="catalytic activity">
    <reaction evidence="1">
        <text>L-cysteinyl-[prolipoprotein] + a 1,2-diacyl-sn-glycero-3-phospho-(1'-sn-glycerol) = an S-1,2-diacyl-sn-glyceryl-L-cysteinyl-[prolipoprotein] + sn-glycerol 1-phosphate + H(+)</text>
        <dbReference type="Rhea" id="RHEA:56712"/>
        <dbReference type="Rhea" id="RHEA-COMP:14679"/>
        <dbReference type="Rhea" id="RHEA-COMP:14680"/>
        <dbReference type="ChEBI" id="CHEBI:15378"/>
        <dbReference type="ChEBI" id="CHEBI:29950"/>
        <dbReference type="ChEBI" id="CHEBI:57685"/>
        <dbReference type="ChEBI" id="CHEBI:64716"/>
        <dbReference type="ChEBI" id="CHEBI:140658"/>
        <dbReference type="EC" id="2.5.1.145"/>
    </reaction>
</comment>
<comment type="pathway">
    <text evidence="1">Protein modification; lipoprotein biosynthesis (diacylglyceryl transfer).</text>
</comment>
<comment type="subcellular location">
    <subcellularLocation>
        <location evidence="1">Cell membrane</location>
        <topology evidence="1">Multi-pass membrane protein</topology>
    </subcellularLocation>
</comment>
<comment type="similarity">
    <text evidence="1">Belongs to the Lgt family.</text>
</comment>
<evidence type="ECO:0000255" key="1">
    <source>
        <dbReference type="HAMAP-Rule" id="MF_01147"/>
    </source>
</evidence>
<gene>
    <name evidence="1" type="primary">lgt</name>
    <name type="ordered locus">Cagg_2864</name>
</gene>
<protein>
    <recommendedName>
        <fullName evidence="1">Phosphatidylglycerol--prolipoprotein diacylglyceryl transferase</fullName>
        <ecNumber evidence="1">2.5.1.145</ecNumber>
    </recommendedName>
</protein>
<feature type="chain" id="PRO_1000164133" description="Phosphatidylglycerol--prolipoprotein diacylglyceryl transferase">
    <location>
        <begin position="1"/>
        <end position="305"/>
    </location>
</feature>
<feature type="transmembrane region" description="Helical" evidence="1">
    <location>
        <begin position="10"/>
        <end position="30"/>
    </location>
</feature>
<feature type="transmembrane region" description="Helical" evidence="1">
    <location>
        <begin position="59"/>
        <end position="79"/>
    </location>
</feature>
<feature type="transmembrane region" description="Helical" evidence="1">
    <location>
        <begin position="92"/>
        <end position="112"/>
    </location>
</feature>
<feature type="transmembrane region" description="Helical" evidence="1">
    <location>
        <begin position="182"/>
        <end position="202"/>
    </location>
</feature>
<feature type="transmembrane region" description="Helical" evidence="1">
    <location>
        <begin position="260"/>
        <end position="280"/>
    </location>
</feature>
<feature type="binding site" evidence="1">
    <location>
        <position position="140"/>
    </location>
    <ligand>
        <name>a 1,2-diacyl-sn-glycero-3-phospho-(1'-sn-glycerol)</name>
        <dbReference type="ChEBI" id="CHEBI:64716"/>
    </ligand>
</feature>
<reference key="1">
    <citation type="submission" date="2008-12" db="EMBL/GenBank/DDBJ databases">
        <title>Complete sequence of Chloroflexus aggregans DSM 9485.</title>
        <authorList>
            <consortium name="US DOE Joint Genome Institute"/>
            <person name="Lucas S."/>
            <person name="Copeland A."/>
            <person name="Lapidus A."/>
            <person name="Glavina del Rio T."/>
            <person name="Dalin E."/>
            <person name="Tice H."/>
            <person name="Pitluck S."/>
            <person name="Foster B."/>
            <person name="Larimer F."/>
            <person name="Land M."/>
            <person name="Hauser L."/>
            <person name="Kyrpides N."/>
            <person name="Mikhailova N."/>
            <person name="Bryant D.A."/>
            <person name="Richardson P."/>
        </authorList>
    </citation>
    <scope>NUCLEOTIDE SEQUENCE [LARGE SCALE GENOMIC DNA]</scope>
    <source>
        <strain>MD-66 / DSM 9485</strain>
    </source>
</reference>